<geneLocation type="chloroplast"/>
<sequence>MIVFPFLLFQMLSTEVEGGLFDFNATLPLMALQFIILTTILNFIFYKPVTNVLDERDEYIRNSLTTASASLVKADELTKTYEQQLAESRKKAQDIIKVAQEQAQQIVSVKIKDAQAYGEKLVSEAFHQLSIQKEDALKTLEMQVDTLSDLIKSKLLND</sequence>
<comment type="function">
    <text evidence="1">F(1)F(0) ATP synthase produces ATP from ADP in the presence of a proton or sodium gradient. F-type ATPases consist of two structural domains, F(1) containing the extramembraneous catalytic core and F(0) containing the membrane proton channel, linked together by a central stalk and a peripheral stalk. During catalysis, ATP synthesis in the catalytic domain of F(1) is coupled via a rotary mechanism of the central stalk subunits to proton translocation.</text>
</comment>
<comment type="function">
    <text evidence="1">Component of the F(0) channel, it forms part of the peripheral stalk, linking F(1) to F(0). The b'-subunit is a diverged and duplicated form of b found in plants and photosynthetic bacteria.</text>
</comment>
<comment type="subunit">
    <text evidence="1">F-type ATPases have 2 components, F(1) - the catalytic core - and F(0) - the membrane proton channel. F(1) has five subunits: alpha(3), beta(3), gamma(1), delta(1), epsilon(1). F(0) has four main subunits: a(1), b(1), b'(1) and c(10-14). The alpha and beta chains form an alternating ring which encloses part of the gamma chain. F(1) is attached to F(0) by a central stalk formed by the gamma and epsilon chains, while a peripheral stalk is formed by the delta, b and b' chains.</text>
</comment>
<comment type="subcellular location">
    <subcellularLocation>
        <location evidence="1">Plastid</location>
        <location evidence="1">Chloroplast thylakoid membrane</location>
        <topology evidence="1">Single-pass membrane protein</topology>
    </subcellularLocation>
</comment>
<comment type="miscellaneous">
    <text>In plastids the F-type ATPase is also known as CF(1)CF(0).</text>
</comment>
<comment type="similarity">
    <text evidence="1">Belongs to the ATPase B chain family.</text>
</comment>
<keyword id="KW-0066">ATP synthesis</keyword>
<keyword id="KW-0138">CF(0)</keyword>
<keyword id="KW-0150">Chloroplast</keyword>
<keyword id="KW-0375">Hydrogen ion transport</keyword>
<keyword id="KW-0406">Ion transport</keyword>
<keyword id="KW-0472">Membrane</keyword>
<keyword id="KW-0934">Plastid</keyword>
<keyword id="KW-0793">Thylakoid</keyword>
<keyword id="KW-0812">Transmembrane</keyword>
<keyword id="KW-1133">Transmembrane helix</keyword>
<keyword id="KW-0813">Transport</keyword>
<organism>
    <name type="scientific">Gracilaria tenuistipitata var. liui</name>
    <name type="common">Red alga</name>
    <dbReference type="NCBI Taxonomy" id="285951"/>
    <lineage>
        <taxon>Eukaryota</taxon>
        <taxon>Rhodophyta</taxon>
        <taxon>Florideophyceae</taxon>
        <taxon>Rhodymeniophycidae</taxon>
        <taxon>Gracilariales</taxon>
        <taxon>Gracilariaceae</taxon>
        <taxon>Gracilaria</taxon>
        <taxon>Gracilaria tenuistipitata</taxon>
    </lineage>
</organism>
<reference key="1">
    <citation type="journal article" date="2004" name="J. Mol. Evol.">
        <title>Comparative analysis of the complete plastid genome sequence of the red alga Gracilaria tenuistipitata var. liui provides insights into the evolution of rhodoplasts and their relationship to other plastids.</title>
        <authorList>
            <person name="Hagopian J.C."/>
            <person name="Reis M."/>
            <person name="Kitajima J.P."/>
            <person name="Bhattacharya D."/>
            <person name="de Oliveira M.C."/>
        </authorList>
    </citation>
    <scope>NUCLEOTIDE SEQUENCE [LARGE SCALE GENOMIC DNA]</scope>
</reference>
<evidence type="ECO:0000255" key="1">
    <source>
        <dbReference type="HAMAP-Rule" id="MF_01399"/>
    </source>
</evidence>
<accession>Q6B8R1</accession>
<name>ATPF2_GRATL</name>
<dbReference type="EMBL" id="AY673996">
    <property type="protein sequence ID" value="AAT79724.1"/>
    <property type="molecule type" value="Genomic_DNA"/>
</dbReference>
<dbReference type="RefSeq" id="YP_063649.1">
    <property type="nucleotide sequence ID" value="NC_006137.1"/>
</dbReference>
<dbReference type="SMR" id="Q6B8R1"/>
<dbReference type="GeneID" id="2944095"/>
<dbReference type="GO" id="GO:0009535">
    <property type="term" value="C:chloroplast thylakoid membrane"/>
    <property type="evidence" value="ECO:0007669"/>
    <property type="project" value="UniProtKB-SubCell"/>
</dbReference>
<dbReference type="GO" id="GO:0045259">
    <property type="term" value="C:proton-transporting ATP synthase complex"/>
    <property type="evidence" value="ECO:0007669"/>
    <property type="project" value="UniProtKB-KW"/>
</dbReference>
<dbReference type="GO" id="GO:0046933">
    <property type="term" value="F:proton-transporting ATP synthase activity, rotational mechanism"/>
    <property type="evidence" value="ECO:0007669"/>
    <property type="project" value="UniProtKB-UniRule"/>
</dbReference>
<dbReference type="GO" id="GO:0046961">
    <property type="term" value="F:proton-transporting ATPase activity, rotational mechanism"/>
    <property type="evidence" value="ECO:0007669"/>
    <property type="project" value="TreeGrafter"/>
</dbReference>
<dbReference type="CDD" id="cd06503">
    <property type="entry name" value="ATP-synt_Fo_b"/>
    <property type="match status" value="1"/>
</dbReference>
<dbReference type="Gene3D" id="1.20.5.620">
    <property type="entry name" value="F1F0 ATP synthase subunit B, membrane domain"/>
    <property type="match status" value="1"/>
</dbReference>
<dbReference type="HAMAP" id="MF_01398">
    <property type="entry name" value="ATP_synth_b_bprime"/>
    <property type="match status" value="1"/>
</dbReference>
<dbReference type="HAMAP" id="MF_01399">
    <property type="entry name" value="ATP_synth_bprime"/>
    <property type="match status" value="1"/>
</dbReference>
<dbReference type="InterPro" id="IPR034679">
    <property type="entry name" value="ATP_synth_b"/>
</dbReference>
<dbReference type="InterPro" id="IPR028987">
    <property type="entry name" value="ATP_synth_B-like_membr_sf"/>
</dbReference>
<dbReference type="InterPro" id="IPR002146">
    <property type="entry name" value="ATP_synth_b/b'su_bac/chlpt"/>
</dbReference>
<dbReference type="InterPro" id="IPR050059">
    <property type="entry name" value="ATP_synthase_B_chain"/>
</dbReference>
<dbReference type="NCBIfam" id="NF005607">
    <property type="entry name" value="PRK07353.1"/>
    <property type="match status" value="1"/>
</dbReference>
<dbReference type="PANTHER" id="PTHR33445">
    <property type="entry name" value="ATP SYNTHASE SUBUNIT B', CHLOROPLASTIC"/>
    <property type="match status" value="1"/>
</dbReference>
<dbReference type="PANTHER" id="PTHR33445:SF2">
    <property type="entry name" value="ATP SYNTHASE SUBUNIT B', CHLOROPLASTIC"/>
    <property type="match status" value="1"/>
</dbReference>
<dbReference type="Pfam" id="PF00430">
    <property type="entry name" value="ATP-synt_B"/>
    <property type="match status" value="1"/>
</dbReference>
<dbReference type="SUPFAM" id="SSF81573">
    <property type="entry name" value="F1F0 ATP synthase subunit B, membrane domain"/>
    <property type="match status" value="1"/>
</dbReference>
<proteinExistence type="inferred from homology"/>
<feature type="chain" id="PRO_0000369062" description="ATP synthase subunit b', chloroplastic">
    <location>
        <begin position="1"/>
        <end position="158"/>
    </location>
</feature>
<feature type="transmembrane region" description="Helical" evidence="1">
    <location>
        <begin position="25"/>
        <end position="45"/>
    </location>
</feature>
<protein>
    <recommendedName>
        <fullName evidence="1">ATP synthase subunit b', chloroplastic</fullName>
    </recommendedName>
    <alternativeName>
        <fullName evidence="1">ATP synthase F(0) sector subunit b'</fullName>
    </alternativeName>
    <alternativeName>
        <fullName evidence="1">ATPase subunit II</fullName>
    </alternativeName>
</protein>
<gene>
    <name evidence="1" type="primary">atpF2</name>
    <name evidence="1" type="synonym">atpG</name>
    <name type="ordered locus">Grc000143</name>
</gene>